<keyword id="KW-0143">Chaperone</keyword>
<keyword id="KW-0963">Cytoplasm</keyword>
<keyword id="KW-1185">Reference proteome</keyword>
<reference key="1">
    <citation type="submission" date="2009-01" db="EMBL/GenBank/DDBJ databases">
        <title>Complete sequence of Geobacter sp. FRC-32.</title>
        <authorList>
            <consortium name="US DOE Joint Genome Institute"/>
            <person name="Lucas S."/>
            <person name="Copeland A."/>
            <person name="Lapidus A."/>
            <person name="Glavina del Rio T."/>
            <person name="Dalin E."/>
            <person name="Tice H."/>
            <person name="Bruce D."/>
            <person name="Goodwin L."/>
            <person name="Pitluck S."/>
            <person name="Saunders E."/>
            <person name="Brettin T."/>
            <person name="Detter J.C."/>
            <person name="Han C."/>
            <person name="Larimer F."/>
            <person name="Land M."/>
            <person name="Hauser L."/>
            <person name="Kyrpides N."/>
            <person name="Ovchinnikova G."/>
            <person name="Kostka J."/>
            <person name="Richardson P."/>
        </authorList>
    </citation>
    <scope>NUCLEOTIDE SEQUENCE [LARGE SCALE GENOMIC DNA]</scope>
    <source>
        <strain>DSM 22248 / JCM 15807 / FRC-32</strain>
    </source>
</reference>
<proteinExistence type="inferred from homology"/>
<protein>
    <recommendedName>
        <fullName evidence="1">Co-chaperonin GroES</fullName>
    </recommendedName>
    <alternativeName>
        <fullName evidence="1">10 kDa chaperonin</fullName>
    </alternativeName>
    <alternativeName>
        <fullName evidence="1">Chaperonin-10</fullName>
        <shortName evidence="1">Cpn10</shortName>
    </alternativeName>
</protein>
<accession>B9LZ36</accession>
<comment type="function">
    <text evidence="1">Together with the chaperonin GroEL, plays an essential role in assisting protein folding. The GroEL-GroES system forms a nano-cage that allows encapsulation of the non-native substrate proteins and provides a physical environment optimized to promote and accelerate protein folding. GroES binds to the apical surface of the GroEL ring, thereby capping the opening of the GroEL channel.</text>
</comment>
<comment type="subunit">
    <text evidence="1">Heptamer of 7 subunits arranged in a ring. Interacts with the chaperonin GroEL.</text>
</comment>
<comment type="subcellular location">
    <subcellularLocation>
        <location evidence="1">Cytoplasm</location>
    </subcellularLocation>
</comment>
<comment type="similarity">
    <text evidence="1">Belongs to the GroES chaperonin family.</text>
</comment>
<organism>
    <name type="scientific">Geotalea daltonii (strain DSM 22248 / JCM 15807 / FRC-32)</name>
    <name type="common">Geobacter daltonii</name>
    <dbReference type="NCBI Taxonomy" id="316067"/>
    <lineage>
        <taxon>Bacteria</taxon>
        <taxon>Pseudomonadati</taxon>
        <taxon>Thermodesulfobacteriota</taxon>
        <taxon>Desulfuromonadia</taxon>
        <taxon>Geobacterales</taxon>
        <taxon>Geobacteraceae</taxon>
        <taxon>Geotalea</taxon>
    </lineage>
</organism>
<evidence type="ECO:0000255" key="1">
    <source>
        <dbReference type="HAMAP-Rule" id="MF_00580"/>
    </source>
</evidence>
<dbReference type="EMBL" id="CP001390">
    <property type="protein sequence ID" value="ACM18768.1"/>
    <property type="molecule type" value="Genomic_DNA"/>
</dbReference>
<dbReference type="RefSeq" id="WP_012645497.1">
    <property type="nucleotide sequence ID" value="NC_011979.1"/>
</dbReference>
<dbReference type="SMR" id="B9LZ36"/>
<dbReference type="STRING" id="316067.Geob_0399"/>
<dbReference type="KEGG" id="geo:Geob_0399"/>
<dbReference type="eggNOG" id="COG0234">
    <property type="taxonomic scope" value="Bacteria"/>
</dbReference>
<dbReference type="HOGENOM" id="CLU_132825_0_0_7"/>
<dbReference type="OrthoDB" id="9806791at2"/>
<dbReference type="Proteomes" id="UP000007721">
    <property type="component" value="Chromosome"/>
</dbReference>
<dbReference type="GO" id="GO:0005737">
    <property type="term" value="C:cytoplasm"/>
    <property type="evidence" value="ECO:0007669"/>
    <property type="project" value="UniProtKB-SubCell"/>
</dbReference>
<dbReference type="GO" id="GO:0005524">
    <property type="term" value="F:ATP binding"/>
    <property type="evidence" value="ECO:0007669"/>
    <property type="project" value="InterPro"/>
</dbReference>
<dbReference type="GO" id="GO:0046872">
    <property type="term" value="F:metal ion binding"/>
    <property type="evidence" value="ECO:0007669"/>
    <property type="project" value="TreeGrafter"/>
</dbReference>
<dbReference type="GO" id="GO:0044183">
    <property type="term" value="F:protein folding chaperone"/>
    <property type="evidence" value="ECO:0007669"/>
    <property type="project" value="InterPro"/>
</dbReference>
<dbReference type="GO" id="GO:0051087">
    <property type="term" value="F:protein-folding chaperone binding"/>
    <property type="evidence" value="ECO:0007669"/>
    <property type="project" value="TreeGrafter"/>
</dbReference>
<dbReference type="GO" id="GO:0051082">
    <property type="term" value="F:unfolded protein binding"/>
    <property type="evidence" value="ECO:0007669"/>
    <property type="project" value="TreeGrafter"/>
</dbReference>
<dbReference type="GO" id="GO:0051085">
    <property type="term" value="P:chaperone cofactor-dependent protein refolding"/>
    <property type="evidence" value="ECO:0007669"/>
    <property type="project" value="TreeGrafter"/>
</dbReference>
<dbReference type="CDD" id="cd00320">
    <property type="entry name" value="cpn10"/>
    <property type="match status" value="1"/>
</dbReference>
<dbReference type="FunFam" id="2.30.33.40:FF:000001">
    <property type="entry name" value="10 kDa chaperonin"/>
    <property type="match status" value="1"/>
</dbReference>
<dbReference type="Gene3D" id="2.30.33.40">
    <property type="entry name" value="GroES chaperonin"/>
    <property type="match status" value="1"/>
</dbReference>
<dbReference type="HAMAP" id="MF_00580">
    <property type="entry name" value="CH10"/>
    <property type="match status" value="1"/>
</dbReference>
<dbReference type="InterPro" id="IPR020818">
    <property type="entry name" value="Chaperonin_GroES"/>
</dbReference>
<dbReference type="InterPro" id="IPR037124">
    <property type="entry name" value="Chaperonin_GroES_sf"/>
</dbReference>
<dbReference type="InterPro" id="IPR011032">
    <property type="entry name" value="GroES-like_sf"/>
</dbReference>
<dbReference type="NCBIfam" id="NF001527">
    <property type="entry name" value="PRK00364.1-2"/>
    <property type="match status" value="1"/>
</dbReference>
<dbReference type="NCBIfam" id="NF001529">
    <property type="entry name" value="PRK00364.1-5"/>
    <property type="match status" value="1"/>
</dbReference>
<dbReference type="NCBIfam" id="NF001530">
    <property type="entry name" value="PRK00364.1-6"/>
    <property type="match status" value="1"/>
</dbReference>
<dbReference type="NCBIfam" id="NF001531">
    <property type="entry name" value="PRK00364.2-2"/>
    <property type="match status" value="1"/>
</dbReference>
<dbReference type="NCBIfam" id="NF001533">
    <property type="entry name" value="PRK00364.2-4"/>
    <property type="match status" value="1"/>
</dbReference>
<dbReference type="NCBIfam" id="NF001534">
    <property type="entry name" value="PRK00364.2-5"/>
    <property type="match status" value="1"/>
</dbReference>
<dbReference type="PANTHER" id="PTHR10772">
    <property type="entry name" value="10 KDA HEAT SHOCK PROTEIN"/>
    <property type="match status" value="1"/>
</dbReference>
<dbReference type="PANTHER" id="PTHR10772:SF58">
    <property type="entry name" value="CO-CHAPERONIN GROES"/>
    <property type="match status" value="1"/>
</dbReference>
<dbReference type="Pfam" id="PF00166">
    <property type="entry name" value="Cpn10"/>
    <property type="match status" value="1"/>
</dbReference>
<dbReference type="PRINTS" id="PR00297">
    <property type="entry name" value="CHAPERONIN10"/>
</dbReference>
<dbReference type="SMART" id="SM00883">
    <property type="entry name" value="Cpn10"/>
    <property type="match status" value="1"/>
</dbReference>
<dbReference type="SUPFAM" id="SSF50129">
    <property type="entry name" value="GroES-like"/>
    <property type="match status" value="1"/>
</dbReference>
<sequence length="96" mass="10717">MKLRPMQDRIIVKRVEEETKTAGGIYIPETAKEKPQEGEVVAVGNGKRTEDGKILPLDVKVGDKVLFGKYSGTEVKVEGQDYLIMREDDILGVIEK</sequence>
<gene>
    <name evidence="1" type="primary">groES</name>
    <name evidence="1" type="synonym">groS</name>
    <name type="ordered locus">Geob_0399</name>
</gene>
<feature type="chain" id="PRO_1000146906" description="Co-chaperonin GroES">
    <location>
        <begin position="1"/>
        <end position="96"/>
    </location>
</feature>
<name>CH10_GEODF</name>